<gene>
    <name evidence="1" type="primary">ruvB</name>
    <name type="ordered locus">lwe1545</name>
</gene>
<name>RUVB_LISW6</name>
<organism>
    <name type="scientific">Listeria welshimeri serovar 6b (strain ATCC 35897 / DSM 20650 / CCUG 15529 / CIP 8149 / NCTC 11857 / SLCC 5334 / V8)</name>
    <dbReference type="NCBI Taxonomy" id="386043"/>
    <lineage>
        <taxon>Bacteria</taxon>
        <taxon>Bacillati</taxon>
        <taxon>Bacillota</taxon>
        <taxon>Bacilli</taxon>
        <taxon>Bacillales</taxon>
        <taxon>Listeriaceae</taxon>
        <taxon>Listeria</taxon>
    </lineage>
</organism>
<accession>A0AIY1</accession>
<sequence length="335" mass="37036">MDERIISSETVDAEEVSFETSLRPQTLSQYIGQDKVKNNLTVFIEAATLRNEALDHVLLYGPPGLGKTTLAMVIASEMGSQIKTTSGPAIERPGDLATILTSLEPGDVLFIDEIHRLSRAIEEILYPAMEDYCLDIVIGTGPTARSVRLDLPPFTLIGATTRAGLLSAPLRDRFGVIDHLEFYTEEQLTEIVLRTAGILDTKIDDLGAREIARRSRGTPRIANRLLKRVRDFAQVRGNGTVTEKLAKEALTLLQVDPRGLDTIDQKLLHTIIQSFRGGPVGLDTIAASIGEERETIEDMQEPYLLQIGFLQRTPRGRIATETAYNHLGISYEKEV</sequence>
<protein>
    <recommendedName>
        <fullName evidence="1">Holliday junction branch migration complex subunit RuvB</fullName>
        <ecNumber evidence="1">3.6.4.-</ecNumber>
    </recommendedName>
</protein>
<proteinExistence type="inferred from homology"/>
<reference key="1">
    <citation type="journal article" date="2006" name="J. Bacteriol.">
        <title>Whole-genome sequence of Listeria welshimeri reveals common steps in genome reduction with Listeria innocua as compared to Listeria monocytogenes.</title>
        <authorList>
            <person name="Hain T."/>
            <person name="Steinweg C."/>
            <person name="Kuenne C.T."/>
            <person name="Billion A."/>
            <person name="Ghai R."/>
            <person name="Chatterjee S.S."/>
            <person name="Domann E."/>
            <person name="Kaerst U."/>
            <person name="Goesmann A."/>
            <person name="Bekel T."/>
            <person name="Bartels D."/>
            <person name="Kaiser O."/>
            <person name="Meyer F."/>
            <person name="Puehler A."/>
            <person name="Weisshaar B."/>
            <person name="Wehland J."/>
            <person name="Liang C."/>
            <person name="Dandekar T."/>
            <person name="Lampidis R."/>
            <person name="Kreft J."/>
            <person name="Goebel W."/>
            <person name="Chakraborty T."/>
        </authorList>
    </citation>
    <scope>NUCLEOTIDE SEQUENCE [LARGE SCALE GENOMIC DNA]</scope>
    <source>
        <strain>ATCC 35897 / DSM 20650 / CCUG 15529 / CIP 8149 / NCTC 11857 / SLCC 5334 / V8</strain>
    </source>
</reference>
<comment type="function">
    <text evidence="1">The RuvA-RuvB-RuvC complex processes Holliday junction (HJ) DNA during genetic recombination and DNA repair, while the RuvA-RuvB complex plays an important role in the rescue of blocked DNA replication forks via replication fork reversal (RFR). RuvA specifically binds to HJ cruciform DNA, conferring on it an open structure. The RuvB hexamer acts as an ATP-dependent pump, pulling dsDNA into and through the RuvAB complex. RuvB forms 2 homohexamers on either side of HJ DNA bound by 1 or 2 RuvA tetramers; 4 subunits per hexamer contact DNA at a time. Coordinated motions by a converter formed by DNA-disengaged RuvB subunits stimulates ATP hydrolysis and nucleotide exchange. Immobilization of the converter enables RuvB to convert the ATP-contained energy into a lever motion, pulling 2 nucleotides of DNA out of the RuvA tetramer per ATP hydrolyzed, thus driving DNA branch migration. The RuvB motors rotate together with the DNA substrate, which together with the progressing nucleotide cycle form the mechanistic basis for DNA recombination by continuous HJ branch migration. Branch migration allows RuvC to scan DNA until it finds its consensus sequence, where it cleaves and resolves cruciform DNA.</text>
</comment>
<comment type="catalytic activity">
    <reaction evidence="1">
        <text>ATP + H2O = ADP + phosphate + H(+)</text>
        <dbReference type="Rhea" id="RHEA:13065"/>
        <dbReference type="ChEBI" id="CHEBI:15377"/>
        <dbReference type="ChEBI" id="CHEBI:15378"/>
        <dbReference type="ChEBI" id="CHEBI:30616"/>
        <dbReference type="ChEBI" id="CHEBI:43474"/>
        <dbReference type="ChEBI" id="CHEBI:456216"/>
    </reaction>
</comment>
<comment type="subunit">
    <text evidence="1">Homohexamer. Forms an RuvA(8)-RuvB(12)-Holliday junction (HJ) complex. HJ DNA is sandwiched between 2 RuvA tetramers; dsDNA enters through RuvA and exits via RuvB. An RuvB hexamer assembles on each DNA strand where it exits the tetramer. Each RuvB hexamer is contacted by two RuvA subunits (via domain III) on 2 adjacent RuvB subunits; this complex drives branch migration. In the full resolvosome a probable DNA-RuvA(4)-RuvB(12)-RuvC(2) complex forms which resolves the HJ.</text>
</comment>
<comment type="subcellular location">
    <subcellularLocation>
        <location evidence="1">Cytoplasm</location>
    </subcellularLocation>
</comment>
<comment type="domain">
    <text evidence="1">Has 3 domains, the large (RuvB-L) and small ATPase (RuvB-S) domains and the C-terminal head (RuvB-H) domain. The head domain binds DNA, while the ATPase domains jointly bind ATP, ADP or are empty depending on the state of the subunit in the translocation cycle. During a single DNA translocation step the structure of each domain remains the same, but their relative positions change.</text>
</comment>
<comment type="similarity">
    <text evidence="1">Belongs to the RuvB family.</text>
</comment>
<evidence type="ECO:0000255" key="1">
    <source>
        <dbReference type="HAMAP-Rule" id="MF_00016"/>
    </source>
</evidence>
<feature type="chain" id="PRO_1000001424" description="Holliday junction branch migration complex subunit RuvB">
    <location>
        <begin position="1"/>
        <end position="335"/>
    </location>
</feature>
<feature type="region of interest" description="Large ATPase domain (RuvB-L)" evidence="1">
    <location>
        <begin position="1"/>
        <end position="183"/>
    </location>
</feature>
<feature type="region of interest" description="Small ATPAse domain (RuvB-S)" evidence="1">
    <location>
        <begin position="184"/>
        <end position="254"/>
    </location>
</feature>
<feature type="region of interest" description="Head domain (RuvB-H)" evidence="1">
    <location>
        <begin position="257"/>
        <end position="335"/>
    </location>
</feature>
<feature type="binding site" evidence="1">
    <location>
        <position position="22"/>
    </location>
    <ligand>
        <name>ATP</name>
        <dbReference type="ChEBI" id="CHEBI:30616"/>
    </ligand>
</feature>
<feature type="binding site" evidence="1">
    <location>
        <position position="23"/>
    </location>
    <ligand>
        <name>ATP</name>
        <dbReference type="ChEBI" id="CHEBI:30616"/>
    </ligand>
</feature>
<feature type="binding site" evidence="1">
    <location>
        <position position="64"/>
    </location>
    <ligand>
        <name>ATP</name>
        <dbReference type="ChEBI" id="CHEBI:30616"/>
    </ligand>
</feature>
<feature type="binding site" evidence="1">
    <location>
        <position position="67"/>
    </location>
    <ligand>
        <name>ATP</name>
        <dbReference type="ChEBI" id="CHEBI:30616"/>
    </ligand>
</feature>
<feature type="binding site" evidence="1">
    <location>
        <position position="68"/>
    </location>
    <ligand>
        <name>ATP</name>
        <dbReference type="ChEBI" id="CHEBI:30616"/>
    </ligand>
</feature>
<feature type="binding site" evidence="1">
    <location>
        <position position="68"/>
    </location>
    <ligand>
        <name>Mg(2+)</name>
        <dbReference type="ChEBI" id="CHEBI:18420"/>
    </ligand>
</feature>
<feature type="binding site" evidence="1">
    <location>
        <position position="69"/>
    </location>
    <ligand>
        <name>ATP</name>
        <dbReference type="ChEBI" id="CHEBI:30616"/>
    </ligand>
</feature>
<feature type="binding site" evidence="1">
    <location>
        <begin position="130"/>
        <end position="132"/>
    </location>
    <ligand>
        <name>ATP</name>
        <dbReference type="ChEBI" id="CHEBI:30616"/>
    </ligand>
</feature>
<feature type="binding site" evidence="1">
    <location>
        <position position="173"/>
    </location>
    <ligand>
        <name>ATP</name>
        <dbReference type="ChEBI" id="CHEBI:30616"/>
    </ligand>
</feature>
<feature type="binding site" evidence="1">
    <location>
        <position position="183"/>
    </location>
    <ligand>
        <name>ATP</name>
        <dbReference type="ChEBI" id="CHEBI:30616"/>
    </ligand>
</feature>
<feature type="binding site" evidence="1">
    <location>
        <position position="220"/>
    </location>
    <ligand>
        <name>ATP</name>
        <dbReference type="ChEBI" id="CHEBI:30616"/>
    </ligand>
</feature>
<feature type="binding site" evidence="1">
    <location>
        <position position="293"/>
    </location>
    <ligand>
        <name>DNA</name>
        <dbReference type="ChEBI" id="CHEBI:16991"/>
    </ligand>
</feature>
<feature type="binding site" evidence="1">
    <location>
        <position position="312"/>
    </location>
    <ligand>
        <name>DNA</name>
        <dbReference type="ChEBI" id="CHEBI:16991"/>
    </ligand>
</feature>
<feature type="binding site" evidence="1">
    <location>
        <position position="317"/>
    </location>
    <ligand>
        <name>DNA</name>
        <dbReference type="ChEBI" id="CHEBI:16991"/>
    </ligand>
</feature>
<dbReference type="EC" id="3.6.4.-" evidence="1"/>
<dbReference type="EMBL" id="AM263198">
    <property type="protein sequence ID" value="CAK20963.1"/>
    <property type="molecule type" value="Genomic_DNA"/>
</dbReference>
<dbReference type="RefSeq" id="WP_011702334.1">
    <property type="nucleotide sequence ID" value="NC_008555.1"/>
</dbReference>
<dbReference type="SMR" id="A0AIY1"/>
<dbReference type="STRING" id="386043.lwe1545"/>
<dbReference type="GeneID" id="61189422"/>
<dbReference type="KEGG" id="lwe:lwe1545"/>
<dbReference type="eggNOG" id="COG2255">
    <property type="taxonomic scope" value="Bacteria"/>
</dbReference>
<dbReference type="HOGENOM" id="CLU_055599_1_0_9"/>
<dbReference type="OrthoDB" id="9804478at2"/>
<dbReference type="Proteomes" id="UP000000779">
    <property type="component" value="Chromosome"/>
</dbReference>
<dbReference type="GO" id="GO:0005737">
    <property type="term" value="C:cytoplasm"/>
    <property type="evidence" value="ECO:0007669"/>
    <property type="project" value="UniProtKB-SubCell"/>
</dbReference>
<dbReference type="GO" id="GO:0048476">
    <property type="term" value="C:Holliday junction resolvase complex"/>
    <property type="evidence" value="ECO:0007669"/>
    <property type="project" value="UniProtKB-UniRule"/>
</dbReference>
<dbReference type="GO" id="GO:0005524">
    <property type="term" value="F:ATP binding"/>
    <property type="evidence" value="ECO:0007669"/>
    <property type="project" value="UniProtKB-UniRule"/>
</dbReference>
<dbReference type="GO" id="GO:0016887">
    <property type="term" value="F:ATP hydrolysis activity"/>
    <property type="evidence" value="ECO:0007669"/>
    <property type="project" value="InterPro"/>
</dbReference>
<dbReference type="GO" id="GO:0000400">
    <property type="term" value="F:four-way junction DNA binding"/>
    <property type="evidence" value="ECO:0007669"/>
    <property type="project" value="UniProtKB-UniRule"/>
</dbReference>
<dbReference type="GO" id="GO:0009378">
    <property type="term" value="F:four-way junction helicase activity"/>
    <property type="evidence" value="ECO:0007669"/>
    <property type="project" value="InterPro"/>
</dbReference>
<dbReference type="GO" id="GO:0006310">
    <property type="term" value="P:DNA recombination"/>
    <property type="evidence" value="ECO:0007669"/>
    <property type="project" value="UniProtKB-UniRule"/>
</dbReference>
<dbReference type="GO" id="GO:0006281">
    <property type="term" value="P:DNA repair"/>
    <property type="evidence" value="ECO:0007669"/>
    <property type="project" value="UniProtKB-UniRule"/>
</dbReference>
<dbReference type="CDD" id="cd00009">
    <property type="entry name" value="AAA"/>
    <property type="match status" value="1"/>
</dbReference>
<dbReference type="Gene3D" id="1.10.8.60">
    <property type="match status" value="1"/>
</dbReference>
<dbReference type="Gene3D" id="3.40.50.300">
    <property type="entry name" value="P-loop containing nucleotide triphosphate hydrolases"/>
    <property type="match status" value="1"/>
</dbReference>
<dbReference type="Gene3D" id="1.10.10.10">
    <property type="entry name" value="Winged helix-like DNA-binding domain superfamily/Winged helix DNA-binding domain"/>
    <property type="match status" value="1"/>
</dbReference>
<dbReference type="HAMAP" id="MF_00016">
    <property type="entry name" value="DNA_HJ_migration_RuvB"/>
    <property type="match status" value="1"/>
</dbReference>
<dbReference type="InterPro" id="IPR003593">
    <property type="entry name" value="AAA+_ATPase"/>
</dbReference>
<dbReference type="InterPro" id="IPR041445">
    <property type="entry name" value="AAA_lid_4"/>
</dbReference>
<dbReference type="InterPro" id="IPR004605">
    <property type="entry name" value="DNA_helicase_Holl-junc_RuvB"/>
</dbReference>
<dbReference type="InterPro" id="IPR027417">
    <property type="entry name" value="P-loop_NTPase"/>
</dbReference>
<dbReference type="InterPro" id="IPR008824">
    <property type="entry name" value="RuvB-like_N"/>
</dbReference>
<dbReference type="InterPro" id="IPR008823">
    <property type="entry name" value="RuvB_C"/>
</dbReference>
<dbReference type="InterPro" id="IPR036388">
    <property type="entry name" value="WH-like_DNA-bd_sf"/>
</dbReference>
<dbReference type="InterPro" id="IPR036390">
    <property type="entry name" value="WH_DNA-bd_sf"/>
</dbReference>
<dbReference type="NCBIfam" id="NF000868">
    <property type="entry name" value="PRK00080.1"/>
    <property type="match status" value="1"/>
</dbReference>
<dbReference type="NCBIfam" id="TIGR00635">
    <property type="entry name" value="ruvB"/>
    <property type="match status" value="1"/>
</dbReference>
<dbReference type="PANTHER" id="PTHR42848">
    <property type="match status" value="1"/>
</dbReference>
<dbReference type="PANTHER" id="PTHR42848:SF1">
    <property type="entry name" value="HOLLIDAY JUNCTION BRANCH MIGRATION COMPLEX SUBUNIT RUVB"/>
    <property type="match status" value="1"/>
</dbReference>
<dbReference type="Pfam" id="PF17864">
    <property type="entry name" value="AAA_lid_4"/>
    <property type="match status" value="1"/>
</dbReference>
<dbReference type="Pfam" id="PF05491">
    <property type="entry name" value="RuvB_C"/>
    <property type="match status" value="1"/>
</dbReference>
<dbReference type="Pfam" id="PF05496">
    <property type="entry name" value="RuvB_N"/>
    <property type="match status" value="1"/>
</dbReference>
<dbReference type="SMART" id="SM00382">
    <property type="entry name" value="AAA"/>
    <property type="match status" value="1"/>
</dbReference>
<dbReference type="SUPFAM" id="SSF52540">
    <property type="entry name" value="P-loop containing nucleoside triphosphate hydrolases"/>
    <property type="match status" value="1"/>
</dbReference>
<dbReference type="SUPFAM" id="SSF46785">
    <property type="entry name" value="Winged helix' DNA-binding domain"/>
    <property type="match status" value="1"/>
</dbReference>
<keyword id="KW-0067">ATP-binding</keyword>
<keyword id="KW-0963">Cytoplasm</keyword>
<keyword id="KW-0227">DNA damage</keyword>
<keyword id="KW-0233">DNA recombination</keyword>
<keyword id="KW-0234">DNA repair</keyword>
<keyword id="KW-0238">DNA-binding</keyword>
<keyword id="KW-0378">Hydrolase</keyword>
<keyword id="KW-0547">Nucleotide-binding</keyword>